<feature type="initiator methionine" description="Removed" evidence="2">
    <location>
        <position position="1"/>
    </location>
</feature>
<feature type="chain" id="PRO_0000248045" description="ATP-binding cassette sub-family F member 3">
    <location>
        <begin position="2"/>
        <end position="709"/>
    </location>
</feature>
<feature type="domain" description="ABC transporter 1" evidence="3">
    <location>
        <begin position="178"/>
        <end position="424"/>
    </location>
</feature>
<feature type="domain" description="ABC transporter 2" evidence="3">
    <location>
        <begin position="492"/>
        <end position="707"/>
    </location>
</feature>
<feature type="region of interest" description="Disordered" evidence="4">
    <location>
        <begin position="129"/>
        <end position="171"/>
    </location>
</feature>
<feature type="compositionally biased region" description="Basic and acidic residues" evidence="4">
    <location>
        <begin position="129"/>
        <end position="143"/>
    </location>
</feature>
<feature type="compositionally biased region" description="Basic and acidic residues" evidence="4">
    <location>
        <begin position="161"/>
        <end position="171"/>
    </location>
</feature>
<feature type="binding site" evidence="3">
    <location>
        <begin position="210"/>
        <end position="217"/>
    </location>
    <ligand>
        <name>ATP</name>
        <dbReference type="ChEBI" id="CHEBI:30616"/>
        <label>1</label>
    </ligand>
</feature>
<feature type="binding site" evidence="3">
    <location>
        <begin position="525"/>
        <end position="532"/>
    </location>
    <ligand>
        <name>ATP</name>
        <dbReference type="ChEBI" id="CHEBI:30616"/>
        <label>2</label>
    </ligand>
</feature>
<feature type="modified residue" description="N-acetylalanine" evidence="2">
    <location>
        <position position="2"/>
    </location>
</feature>
<feature type="modified residue" description="Phosphoserine" evidence="2">
    <location>
        <position position="155"/>
    </location>
</feature>
<feature type="modified residue" description="Phosphoserine" evidence="2">
    <location>
        <position position="157"/>
    </location>
</feature>
<feature type="modified residue" description="Phosphoserine" evidence="2">
    <location>
        <position position="161"/>
    </location>
</feature>
<feature type="modified residue" description="Phosphoserine" evidence="2">
    <location>
        <position position="283"/>
    </location>
</feature>
<reference key="1">
    <citation type="journal article" date="2004" name="Genome Res.">
        <title>The status, quality, and expansion of the NIH full-length cDNA project: the Mammalian Gene Collection (MGC).</title>
        <authorList>
            <consortium name="The MGC Project Team"/>
        </authorList>
    </citation>
    <scope>NUCLEOTIDE SEQUENCE [LARGE SCALE MRNA]</scope>
    <source>
        <tissue>Testis</tissue>
    </source>
</reference>
<accession>Q66H39</accession>
<dbReference type="EMBL" id="BC082042">
    <property type="protein sequence ID" value="AAH82042.1"/>
    <property type="molecule type" value="mRNA"/>
</dbReference>
<dbReference type="RefSeq" id="NP_001011896.1">
    <property type="nucleotide sequence ID" value="NM_001011896.1"/>
</dbReference>
<dbReference type="SMR" id="Q66H39"/>
<dbReference type="FunCoup" id="Q66H39">
    <property type="interactions" value="3489"/>
</dbReference>
<dbReference type="STRING" id="10116.ENSRNOP00000002327"/>
<dbReference type="PhosphoSitePlus" id="Q66H39"/>
<dbReference type="jPOST" id="Q66H39"/>
<dbReference type="PaxDb" id="10116-ENSRNOP00000002327"/>
<dbReference type="GeneID" id="287982"/>
<dbReference type="KEGG" id="rno:287982"/>
<dbReference type="AGR" id="RGD:1310468"/>
<dbReference type="CTD" id="55324"/>
<dbReference type="RGD" id="1310468">
    <property type="gene designation" value="Abcf3"/>
</dbReference>
<dbReference type="VEuPathDB" id="HostDB:ENSRNOG00000001710"/>
<dbReference type="eggNOG" id="KOG0062">
    <property type="taxonomic scope" value="Eukaryota"/>
</dbReference>
<dbReference type="HOGENOM" id="CLU_000604_36_6_1"/>
<dbReference type="InParanoid" id="Q66H39"/>
<dbReference type="OrthoDB" id="2110130at2759"/>
<dbReference type="PhylomeDB" id="Q66H39"/>
<dbReference type="TreeFam" id="TF105209"/>
<dbReference type="PRO" id="PR:Q66H39"/>
<dbReference type="Proteomes" id="UP000002494">
    <property type="component" value="Chromosome 11"/>
</dbReference>
<dbReference type="Bgee" id="ENSRNOG00000001710">
    <property type="expression patterns" value="Expressed in skeletal muscle tissue and 20 other cell types or tissues"/>
</dbReference>
<dbReference type="GO" id="GO:0005524">
    <property type="term" value="F:ATP binding"/>
    <property type="evidence" value="ECO:0000318"/>
    <property type="project" value="GO_Central"/>
</dbReference>
<dbReference type="GO" id="GO:0016887">
    <property type="term" value="F:ATP hydrolysis activity"/>
    <property type="evidence" value="ECO:0007669"/>
    <property type="project" value="InterPro"/>
</dbReference>
<dbReference type="GO" id="GO:0051607">
    <property type="term" value="P:defense response to virus"/>
    <property type="evidence" value="ECO:0007669"/>
    <property type="project" value="UniProtKB-KW"/>
</dbReference>
<dbReference type="CDD" id="cd03221">
    <property type="entry name" value="ABCF_EF-3"/>
    <property type="match status" value="2"/>
</dbReference>
<dbReference type="FunFam" id="3.40.50.300:FF:000104">
    <property type="entry name" value="ATP-binding cassette sub-family F member 3"/>
    <property type="match status" value="1"/>
</dbReference>
<dbReference type="FunFam" id="3.40.50.300:FF:000688">
    <property type="entry name" value="ATP-binding cassette sub-family F member 3"/>
    <property type="match status" value="1"/>
</dbReference>
<dbReference type="Gene3D" id="3.40.50.300">
    <property type="entry name" value="P-loop containing nucleotide triphosphate hydrolases"/>
    <property type="match status" value="2"/>
</dbReference>
<dbReference type="InterPro" id="IPR003593">
    <property type="entry name" value="AAA+_ATPase"/>
</dbReference>
<dbReference type="InterPro" id="IPR032781">
    <property type="entry name" value="ABC_tran_Xtn"/>
</dbReference>
<dbReference type="InterPro" id="IPR003439">
    <property type="entry name" value="ABC_transporter-like_ATP-bd"/>
</dbReference>
<dbReference type="InterPro" id="IPR017871">
    <property type="entry name" value="ABC_transporter-like_CS"/>
</dbReference>
<dbReference type="InterPro" id="IPR050611">
    <property type="entry name" value="ABCF_EF3_subfamily"/>
</dbReference>
<dbReference type="InterPro" id="IPR027417">
    <property type="entry name" value="P-loop_NTPase"/>
</dbReference>
<dbReference type="PANTHER" id="PTHR19211:SF117">
    <property type="entry name" value="ATP-BINDING CASSETTE SUB-FAMILY F MEMBER 3"/>
    <property type="match status" value="1"/>
</dbReference>
<dbReference type="PANTHER" id="PTHR19211">
    <property type="entry name" value="ATP-BINDING TRANSPORT PROTEIN-RELATED"/>
    <property type="match status" value="1"/>
</dbReference>
<dbReference type="Pfam" id="PF00005">
    <property type="entry name" value="ABC_tran"/>
    <property type="match status" value="2"/>
</dbReference>
<dbReference type="Pfam" id="PF12848">
    <property type="entry name" value="ABC_tran_Xtn"/>
    <property type="match status" value="1"/>
</dbReference>
<dbReference type="SMART" id="SM00382">
    <property type="entry name" value="AAA"/>
    <property type="match status" value="2"/>
</dbReference>
<dbReference type="SUPFAM" id="SSF52540">
    <property type="entry name" value="P-loop containing nucleoside triphosphate hydrolases"/>
    <property type="match status" value="2"/>
</dbReference>
<dbReference type="PROSITE" id="PS00211">
    <property type="entry name" value="ABC_TRANSPORTER_1"/>
    <property type="match status" value="2"/>
</dbReference>
<dbReference type="PROSITE" id="PS50893">
    <property type="entry name" value="ABC_TRANSPORTER_2"/>
    <property type="match status" value="2"/>
</dbReference>
<name>ABCF3_RAT</name>
<comment type="function">
    <text evidence="1">Displays an antiviral effect against flaviviruses such as west Nile virus (WNV) in the presence of OAS1B.</text>
</comment>
<comment type="similarity">
    <text evidence="5">Belongs to the ABC transporter superfamily. ABCF family. EF3 subfamily.</text>
</comment>
<comment type="caution">
    <text evidence="5">Lacks transmembrane domains and is probably not involved in transport.</text>
</comment>
<evidence type="ECO:0000250" key="1"/>
<evidence type="ECO:0000250" key="2">
    <source>
        <dbReference type="UniProtKB" id="Q9NUQ8"/>
    </source>
</evidence>
<evidence type="ECO:0000255" key="3">
    <source>
        <dbReference type="PROSITE-ProRule" id="PRU00434"/>
    </source>
</evidence>
<evidence type="ECO:0000256" key="4">
    <source>
        <dbReference type="SAM" id="MobiDB-lite"/>
    </source>
</evidence>
<evidence type="ECO:0000305" key="5"/>
<protein>
    <recommendedName>
        <fullName>ATP-binding cassette sub-family F member 3</fullName>
    </recommendedName>
</protein>
<keyword id="KW-0007">Acetylation</keyword>
<keyword id="KW-0051">Antiviral defense</keyword>
<keyword id="KW-0067">ATP-binding</keyword>
<keyword id="KW-0547">Nucleotide-binding</keyword>
<keyword id="KW-0597">Phosphoprotein</keyword>
<keyword id="KW-1185">Reference proteome</keyword>
<keyword id="KW-0677">Repeat</keyword>
<organism>
    <name type="scientific">Rattus norvegicus</name>
    <name type="common">Rat</name>
    <dbReference type="NCBI Taxonomy" id="10116"/>
    <lineage>
        <taxon>Eukaryota</taxon>
        <taxon>Metazoa</taxon>
        <taxon>Chordata</taxon>
        <taxon>Craniata</taxon>
        <taxon>Vertebrata</taxon>
        <taxon>Euteleostomi</taxon>
        <taxon>Mammalia</taxon>
        <taxon>Eutheria</taxon>
        <taxon>Euarchontoglires</taxon>
        <taxon>Glires</taxon>
        <taxon>Rodentia</taxon>
        <taxon>Myomorpha</taxon>
        <taxon>Muroidea</taxon>
        <taxon>Muridae</taxon>
        <taxon>Murinae</taxon>
        <taxon>Rattus</taxon>
    </lineage>
</organism>
<gene>
    <name type="primary">Abcf3</name>
</gene>
<proteinExistence type="evidence at transcript level"/>
<sequence>MATCADILRSEFPEIDGQVFDYVTGVLHSGSADFESVDDLVEAVGELLQEVSGDSKDDAGIRAVCQRMYNTLRLAEPQNQGNNQVLLDAPIQLSKIMENYDCDTKLPGLLKREQSSTVNAKKLEKAEARLKAKQEKRSEKETLKTSSPLVLEEASASQAGSRKESRLESSGKNKSYDVRIENFDVSFGDRVLLAGADVNLAWGRRYGLVGRNGLGKTTLLKMLATRSLRVPAHISLLHVEQEVAGDDTPALQSVLESDTIREDLLRQERGLSLKIAAGRAEGSEAALLAEVYTKLEEIEADKAPARASVILAGLGFTPKMQQQPTREFSGGWRMRLALARALFARPDLLLLDEPTNMLDVRAILWLENYLQTWPSTILVVSHDRNFLNAIATDIIHLHSQRLDGYRGDFETFIKSKQERLLNQQREYEAQQQYRQHIQVFIDRFRYNANRASQVQSKLKMLEKLPELKPVDKESEVVLKFPDGFEKFSPPILQLDEVDFYYDPKHIIFSRLSVSADLESRICVVGENGAGKSTMLKLLMGDLAPVRGIRHAHRNLKIGYFSQHHVEQLDLNVSAVELLARKFPGRPEEEYRHQLGRYGISGELAMRPVASLSGGQKSRVAFAQMTMPCPNFYILDEPTNHLDMETIEALGHALNNFRGGVVLVSHDERFIRLVCKELWVCEKGSVTRVEGGFDQYRALLQEQFRREGFL</sequence>